<protein>
    <recommendedName>
        <fullName evidence="1">Type II restriction enzyme SfiI</fullName>
        <shortName>R.SfiI</shortName>
        <ecNumber>3.1.21.4</ecNumber>
    </recommendedName>
    <alternativeName>
        <fullName>Endonuclease SfiI</fullName>
    </alternativeName>
    <alternativeName>
        <fullName>Type-2 restriction enzyme SfiI</fullName>
    </alternativeName>
</protein>
<keyword id="KW-0002">3D-structure</keyword>
<keyword id="KW-0255">Endonuclease</keyword>
<keyword id="KW-0378">Hydrolase</keyword>
<keyword id="KW-0540">Nuclease</keyword>
<keyword id="KW-0680">Restriction system</keyword>
<accession>O52512</accession>
<reference key="1">
    <citation type="submission" date="1997-12" db="EMBL/GenBank/DDBJ databases">
        <title>Characterization of the SfiI restriction and modification genes.</title>
        <authorList>
            <person name="van Cott E.M."/>
            <person name="Moran L.S."/>
            <person name="Slatko B.E."/>
            <person name="Wilson G.G."/>
        </authorList>
    </citation>
    <scope>NUCLEOTIDE SEQUENCE [GENOMIC DNA]</scope>
</reference>
<reference key="2">
    <citation type="journal article" date="2003" name="Nucleic Acids Res.">
        <title>A nomenclature for restriction enzymes, DNA methyltransferases, homing endonucleases and their genes.</title>
        <authorList>
            <person name="Roberts R.J."/>
            <person name="Belfort M."/>
            <person name="Bestor T."/>
            <person name="Bhagwat A.S."/>
            <person name="Bickle T.A."/>
            <person name="Bitinaite J."/>
            <person name="Blumenthal R.M."/>
            <person name="Degtyarev S.K."/>
            <person name="Dryden D.T."/>
            <person name="Dybvig K."/>
            <person name="Firman K."/>
            <person name="Gromova E.S."/>
            <person name="Gumport R.I."/>
            <person name="Halford S.E."/>
            <person name="Hattman S."/>
            <person name="Heitman J."/>
            <person name="Hornby D.P."/>
            <person name="Janulaitis A."/>
            <person name="Jeltsch A."/>
            <person name="Josephsen J."/>
            <person name="Kiss A."/>
            <person name="Klaenhammer T.R."/>
            <person name="Kobayashi I."/>
            <person name="Kong H."/>
            <person name="Krueger D.H."/>
            <person name="Lacks S."/>
            <person name="Marinus M.G."/>
            <person name="Miyahara M."/>
            <person name="Morgan R.D."/>
            <person name="Murray N.E."/>
            <person name="Nagaraja V."/>
            <person name="Piekarowicz A."/>
            <person name="Pingoud A."/>
            <person name="Raleigh E."/>
            <person name="Rao D.N."/>
            <person name="Reich N."/>
            <person name="Repin V.E."/>
            <person name="Selker E.U."/>
            <person name="Shaw P.C."/>
            <person name="Stein D.C."/>
            <person name="Stoddard B.L."/>
            <person name="Szybalski W."/>
            <person name="Trautner T.A."/>
            <person name="Van Etten J.L."/>
            <person name="Vitor J.M."/>
            <person name="Wilson G.G."/>
            <person name="Xu S.Y."/>
        </authorList>
    </citation>
    <scope>NOMENCLATURE</scope>
    <scope>SUBTYPES</scope>
</reference>
<organism>
    <name type="scientific">Streptomyces fimbriatus</name>
    <dbReference type="NCBI Taxonomy" id="68197"/>
    <lineage>
        <taxon>Bacteria</taxon>
        <taxon>Bacillati</taxon>
        <taxon>Actinomycetota</taxon>
        <taxon>Actinomycetes</taxon>
        <taxon>Kitasatosporales</taxon>
        <taxon>Streptomycetaceae</taxon>
        <taxon>Streptomyces</taxon>
    </lineage>
</organism>
<comment type="function">
    <text evidence="1">An F and P subtype restriction enzyme that recognizes the double-stranded sequence 5'-GGCCN(5)GGCC-3' and cleaves before N-9.</text>
</comment>
<comment type="catalytic activity">
    <reaction>
        <text>Endonucleolytic cleavage of DNA to give specific double-stranded fragments with terminal 5'-phosphates.</text>
        <dbReference type="EC" id="3.1.21.4"/>
    </reaction>
</comment>
<proteinExistence type="evidence at protein level"/>
<feature type="chain" id="PRO_0000077366" description="Type II restriction enzyme SfiI">
    <location>
        <begin position="1"/>
        <end position="269"/>
    </location>
</feature>
<feature type="helix" evidence="2">
    <location>
        <begin position="5"/>
        <end position="7"/>
    </location>
</feature>
<feature type="helix" evidence="2">
    <location>
        <begin position="10"/>
        <end position="41"/>
    </location>
</feature>
<feature type="strand" evidence="2">
    <location>
        <begin position="45"/>
        <end position="47"/>
    </location>
</feature>
<feature type="helix" evidence="2">
    <location>
        <begin position="49"/>
        <end position="62"/>
    </location>
</feature>
<feature type="strand" evidence="3">
    <location>
        <begin position="67"/>
        <end position="69"/>
    </location>
</feature>
<feature type="strand" evidence="2">
    <location>
        <begin position="79"/>
        <end position="86"/>
    </location>
</feature>
<feature type="strand" evidence="2">
    <location>
        <begin position="93"/>
        <end position="105"/>
    </location>
</feature>
<feature type="strand" evidence="2">
    <location>
        <begin position="110"/>
        <end position="112"/>
    </location>
</feature>
<feature type="helix" evidence="2">
    <location>
        <begin position="114"/>
        <end position="116"/>
    </location>
</feature>
<feature type="strand" evidence="2">
    <location>
        <begin position="121"/>
        <end position="124"/>
    </location>
</feature>
<feature type="turn" evidence="2">
    <location>
        <begin position="126"/>
        <end position="128"/>
    </location>
</feature>
<feature type="strand" evidence="2">
    <location>
        <begin position="130"/>
        <end position="134"/>
    </location>
</feature>
<feature type="strand" evidence="2">
    <location>
        <begin position="140"/>
        <end position="145"/>
    </location>
</feature>
<feature type="strand" evidence="2">
    <location>
        <begin position="147"/>
        <end position="167"/>
    </location>
</feature>
<feature type="strand" evidence="2">
    <location>
        <begin position="175"/>
        <end position="186"/>
    </location>
</feature>
<feature type="helix" evidence="2">
    <location>
        <begin position="189"/>
        <end position="191"/>
    </location>
</feature>
<feature type="helix" evidence="2">
    <location>
        <begin position="192"/>
        <end position="195"/>
    </location>
</feature>
<feature type="strand" evidence="2">
    <location>
        <begin position="203"/>
        <end position="206"/>
    </location>
</feature>
<feature type="turn" evidence="2">
    <location>
        <begin position="211"/>
        <end position="214"/>
    </location>
</feature>
<feature type="strand" evidence="2">
    <location>
        <begin position="219"/>
        <end position="221"/>
    </location>
</feature>
<feature type="helix" evidence="2">
    <location>
        <begin position="223"/>
        <end position="229"/>
    </location>
</feature>
<feature type="helix" evidence="2">
    <location>
        <begin position="231"/>
        <end position="233"/>
    </location>
</feature>
<feature type="strand" evidence="2">
    <location>
        <begin position="234"/>
        <end position="238"/>
    </location>
</feature>
<feature type="strand" evidence="3">
    <location>
        <begin position="244"/>
        <end position="246"/>
    </location>
</feature>
<feature type="strand" evidence="2">
    <location>
        <begin position="249"/>
        <end position="253"/>
    </location>
</feature>
<feature type="strand" evidence="2">
    <location>
        <begin position="259"/>
        <end position="263"/>
    </location>
</feature>
<name>T2S1_STRFI</name>
<dbReference type="EC" id="3.1.21.4"/>
<dbReference type="EMBL" id="AF039750">
    <property type="protein sequence ID" value="AAB95365.1"/>
    <property type="molecule type" value="Genomic_DNA"/>
</dbReference>
<dbReference type="RefSeq" id="WP_344643560.1">
    <property type="nucleotide sequence ID" value="NZ_BAAASS010000004.1"/>
</dbReference>
<dbReference type="PDB" id="2EZV">
    <property type="method" value="X-ray"/>
    <property type="resolution" value="2.40 A"/>
    <property type="chains" value="A/B=1-269"/>
</dbReference>
<dbReference type="PDB" id="2F03">
    <property type="method" value="X-ray"/>
    <property type="resolution" value="3.05 A"/>
    <property type="chains" value="A/C=1-269"/>
</dbReference>
<dbReference type="PDBsum" id="2EZV"/>
<dbReference type="PDBsum" id="2F03"/>
<dbReference type="SMR" id="O52512"/>
<dbReference type="EvolutionaryTrace" id="O52512"/>
<dbReference type="PRO" id="PR:O52512"/>
<dbReference type="GO" id="GO:0009036">
    <property type="term" value="F:type II site-specific deoxyribonuclease activity"/>
    <property type="evidence" value="ECO:0007669"/>
    <property type="project" value="UniProtKB-EC"/>
</dbReference>
<dbReference type="GO" id="GO:0009307">
    <property type="term" value="P:DNA restriction-modification system"/>
    <property type="evidence" value="ECO:0007669"/>
    <property type="project" value="UniProtKB-KW"/>
</dbReference>
<dbReference type="Gene3D" id="3.40.600.40">
    <property type="match status" value="1"/>
</dbReference>
<dbReference type="Gene3D" id="2.40.50.610">
    <property type="entry name" value="Type II restriction enzyme SfiI, DNA-recognition domain"/>
    <property type="match status" value="1"/>
</dbReference>
<dbReference type="InterPro" id="IPR021580">
    <property type="entry name" value="Restrct_endonuc_II_SfiI"/>
</dbReference>
<dbReference type="InterPro" id="IPR043118">
    <property type="entry name" value="Restrct_endonuc_II_SfiI_dom1"/>
</dbReference>
<dbReference type="InterPro" id="IPR043117">
    <property type="entry name" value="Restrct_endonuc_II_SfiI_dom2"/>
</dbReference>
<dbReference type="Pfam" id="PF11487">
    <property type="entry name" value="RestrictionSfiI"/>
    <property type="match status" value="1"/>
</dbReference>
<evidence type="ECO:0000303" key="1">
    <source>
    </source>
</evidence>
<evidence type="ECO:0007829" key="2">
    <source>
        <dbReference type="PDB" id="2EZV"/>
    </source>
</evidence>
<evidence type="ECO:0007829" key="3">
    <source>
        <dbReference type="PDB" id="2F03"/>
    </source>
</evidence>
<sequence>MHQDYRELSLDELESVEKQTLRTIVQALQQYSKEAKSIFETTAADSSGEVIVLAEDITQYALEVAETYPINRRFAGFIDYKRVRWLPSPHGLLPQVLLVDAKASTEKNRDTLQRSQLPMDAEFRNTSSGEVVTMEAGVIPHLMLQSANDGVLPAVTTSIFVHFYYRELKDVEGRYRELKSIYVLSLPHARLKQRYNPDPDTSFFGAGKHSPARGEVARIRVYFDRLKEACPWRLQELHYSADSEYTQPRWRDLNDAGHEVTKEFLFLER</sequence>
<gene>
    <name type="primary">sfiIR</name>
</gene>